<evidence type="ECO:0000255" key="1"/>
<evidence type="ECO:0000256" key="2">
    <source>
        <dbReference type="SAM" id="MobiDB-lite"/>
    </source>
</evidence>
<evidence type="ECO:0000269" key="3">
    <source>
    </source>
</evidence>
<evidence type="ECO:0000269" key="4">
    <source>
    </source>
</evidence>
<evidence type="ECO:0000303" key="5">
    <source>
    </source>
</evidence>
<evidence type="ECO:0000305" key="6"/>
<evidence type="ECO:0000305" key="7">
    <source>
    </source>
</evidence>
<evidence type="ECO:0000312" key="8">
    <source>
        <dbReference type="Araport" id="AT3G55030"/>
    </source>
</evidence>
<evidence type="ECO:0000312" key="9">
    <source>
        <dbReference type="EMBL" id="CAB82698.1"/>
    </source>
</evidence>
<name>PGPS2_ARATH</name>
<comment type="function">
    <text evidence="3 4">Catalyzes the committed step to the synthesis of the acidic phospholipids, including phosphatidylglycerol (PG) (PubMed:11741606, PubMed:24632290). Together with PGPS1, required for the proper embryo development by providing PG accurate levels (PubMed:24632290).</text>
</comment>
<comment type="catalytic activity">
    <reaction evidence="3">
        <text>a CDP-1,2-diacyl-sn-glycerol + sn-glycerol 3-phosphate = a 1,2-diacyl-sn-glycero-3-phospho-(1'-sn-glycero-3'-phosphate) + CMP + H(+)</text>
        <dbReference type="Rhea" id="RHEA:12593"/>
        <dbReference type="ChEBI" id="CHEBI:15378"/>
        <dbReference type="ChEBI" id="CHEBI:57597"/>
        <dbReference type="ChEBI" id="CHEBI:58332"/>
        <dbReference type="ChEBI" id="CHEBI:60110"/>
        <dbReference type="ChEBI" id="CHEBI:60377"/>
        <dbReference type="EC" id="2.7.8.5"/>
    </reaction>
</comment>
<comment type="cofactor">
    <cofactor evidence="3">
        <name>Mn(2+)</name>
        <dbReference type="ChEBI" id="CHEBI:29035"/>
    </cofactor>
</comment>
<comment type="biophysicochemical properties">
    <kinetics>
        <KM evidence="3">62 uM for glycerol-3-phosphate</KM>
        <KM evidence="3">17 uM for CDP-dipalmitoylglycerol</KM>
    </kinetics>
    <phDependence>
        <text evidence="3">Optimum pH is 8.5.</text>
    </phDependence>
</comment>
<comment type="pathway">
    <text>Phospholipid metabolism; phosphatidylglycerol biosynthesis; phosphatidylglycerol from CDP-diacylglycerol: step 1/2.</text>
</comment>
<comment type="subcellular location">
    <subcellularLocation>
        <location evidence="7">Microsome membrane</location>
        <topology evidence="1">Multi-pass membrane protein</topology>
    </subcellularLocation>
    <subcellularLocation>
        <location evidence="4">Endoplasmic reticulum membrane</location>
        <topology evidence="1">Multi-pass membrane protein</topology>
    </subcellularLocation>
</comment>
<comment type="disruption phenotype">
    <text evidence="4">Normal phenotype under normal growth conditions, except slightly decreased sulfoquinovosyldiacylglycerol (SQDG) and phosphatidylglycerol (PG) content, but slightly increased phosphatidylinositol (PI) levels (PubMed:24632290). The pgp1 pgp2 double mutants have delayed embryonic development and produce sterile seeds, their plastids lack thylakoid membranes and their mitochondria show abnormal membrane structures; these phenotypes are associated with deficient phosphatidylglycerol (PG) biosynthesis (PubMed:24632290).</text>
</comment>
<comment type="similarity">
    <text evidence="6">Belongs to the CDP-alcohol phosphatidyltransferase class-I family.</text>
</comment>
<protein>
    <recommendedName>
        <fullName evidence="5">CDP-diacylglycerol--glycerol-3-phosphate 3-phosphatidyltransferase 2</fullName>
        <ecNumber evidence="3">2.7.8.5</ecNumber>
    </recommendedName>
    <alternativeName>
        <fullName evidence="5">Phosphatidylglycerophosphate synthase 2</fullName>
        <shortName evidence="5">PGP synthase 2</shortName>
    </alternativeName>
</protein>
<gene>
    <name evidence="5" type="primary">PGPS2</name>
    <name evidence="5" type="synonym">PGP2</name>
    <name evidence="8" type="ordered locus">At3g55030</name>
    <name evidence="9" type="ORF">T15C9.30</name>
</gene>
<proteinExistence type="evidence at protein level"/>
<reference key="1">
    <citation type="journal article" date="2000" name="Nature">
        <title>Sequence and analysis of chromosome 3 of the plant Arabidopsis thaliana.</title>
        <authorList>
            <person name="Salanoubat M."/>
            <person name="Lemcke K."/>
            <person name="Rieger M."/>
            <person name="Ansorge W."/>
            <person name="Unseld M."/>
            <person name="Fartmann B."/>
            <person name="Valle G."/>
            <person name="Bloecker H."/>
            <person name="Perez-Alonso M."/>
            <person name="Obermaier B."/>
            <person name="Delseny M."/>
            <person name="Boutry M."/>
            <person name="Grivell L.A."/>
            <person name="Mache R."/>
            <person name="Puigdomenech P."/>
            <person name="De Simone V."/>
            <person name="Choisne N."/>
            <person name="Artiguenave F."/>
            <person name="Robert C."/>
            <person name="Brottier P."/>
            <person name="Wincker P."/>
            <person name="Cattolico L."/>
            <person name="Weissenbach J."/>
            <person name="Saurin W."/>
            <person name="Quetier F."/>
            <person name="Schaefer M."/>
            <person name="Mueller-Auer S."/>
            <person name="Gabel C."/>
            <person name="Fuchs M."/>
            <person name="Benes V."/>
            <person name="Wurmbach E."/>
            <person name="Drzonek H."/>
            <person name="Erfle H."/>
            <person name="Jordan N."/>
            <person name="Bangert S."/>
            <person name="Wiedelmann R."/>
            <person name="Kranz H."/>
            <person name="Voss H."/>
            <person name="Holland R."/>
            <person name="Brandt P."/>
            <person name="Nyakatura G."/>
            <person name="Vezzi A."/>
            <person name="D'Angelo M."/>
            <person name="Pallavicini A."/>
            <person name="Toppo S."/>
            <person name="Simionati B."/>
            <person name="Conrad A."/>
            <person name="Hornischer K."/>
            <person name="Kauer G."/>
            <person name="Loehnert T.-H."/>
            <person name="Nordsiek G."/>
            <person name="Reichelt J."/>
            <person name="Scharfe M."/>
            <person name="Schoen O."/>
            <person name="Bargues M."/>
            <person name="Terol J."/>
            <person name="Climent J."/>
            <person name="Navarro P."/>
            <person name="Collado C."/>
            <person name="Perez-Perez A."/>
            <person name="Ottenwaelder B."/>
            <person name="Duchemin D."/>
            <person name="Cooke R."/>
            <person name="Laudie M."/>
            <person name="Berger-Llauro C."/>
            <person name="Purnelle B."/>
            <person name="Masuy D."/>
            <person name="de Haan M."/>
            <person name="Maarse A.C."/>
            <person name="Alcaraz J.-P."/>
            <person name="Cottet A."/>
            <person name="Casacuberta E."/>
            <person name="Monfort A."/>
            <person name="Argiriou A."/>
            <person name="Flores M."/>
            <person name="Liguori R."/>
            <person name="Vitale D."/>
            <person name="Mannhaupt G."/>
            <person name="Haase D."/>
            <person name="Schoof H."/>
            <person name="Rudd S."/>
            <person name="Zaccaria P."/>
            <person name="Mewes H.-W."/>
            <person name="Mayer K.F.X."/>
            <person name="Kaul S."/>
            <person name="Town C.D."/>
            <person name="Koo H.L."/>
            <person name="Tallon L.J."/>
            <person name="Jenkins J."/>
            <person name="Rooney T."/>
            <person name="Rizzo M."/>
            <person name="Walts A."/>
            <person name="Utterback T."/>
            <person name="Fujii C.Y."/>
            <person name="Shea T.P."/>
            <person name="Creasy T.H."/>
            <person name="Haas B."/>
            <person name="Maiti R."/>
            <person name="Wu D."/>
            <person name="Peterson J."/>
            <person name="Van Aken S."/>
            <person name="Pai G."/>
            <person name="Militscher J."/>
            <person name="Sellers P."/>
            <person name="Gill J.E."/>
            <person name="Feldblyum T.V."/>
            <person name="Preuss D."/>
            <person name="Lin X."/>
            <person name="Nierman W.C."/>
            <person name="Salzberg S.L."/>
            <person name="White O."/>
            <person name="Venter J.C."/>
            <person name="Fraser C.M."/>
            <person name="Kaneko T."/>
            <person name="Nakamura Y."/>
            <person name="Sato S."/>
            <person name="Kato T."/>
            <person name="Asamizu E."/>
            <person name="Sasamoto S."/>
            <person name="Kimura T."/>
            <person name="Idesawa K."/>
            <person name="Kawashima K."/>
            <person name="Kishida Y."/>
            <person name="Kiyokawa C."/>
            <person name="Kohara M."/>
            <person name="Matsumoto M."/>
            <person name="Matsuno A."/>
            <person name="Muraki A."/>
            <person name="Nakayama S."/>
            <person name="Nakazaki N."/>
            <person name="Shinpo S."/>
            <person name="Takeuchi C."/>
            <person name="Wada T."/>
            <person name="Watanabe A."/>
            <person name="Yamada M."/>
            <person name="Yasuda M."/>
            <person name="Tabata S."/>
        </authorList>
    </citation>
    <scope>NUCLEOTIDE SEQUENCE [LARGE SCALE GENOMIC DNA]</scope>
    <source>
        <strain>cv. Columbia</strain>
    </source>
</reference>
<reference key="2">
    <citation type="journal article" date="2017" name="Plant J.">
        <title>Araport11: a complete reannotation of the Arabidopsis thaliana reference genome.</title>
        <authorList>
            <person name="Cheng C.Y."/>
            <person name="Krishnakumar V."/>
            <person name="Chan A.P."/>
            <person name="Thibaud-Nissen F."/>
            <person name="Schobel S."/>
            <person name="Town C.D."/>
        </authorList>
    </citation>
    <scope>GENOME REANNOTATION</scope>
    <source>
        <strain>cv. Columbia</strain>
    </source>
</reference>
<reference key="3">
    <citation type="journal article" date="2003" name="Science">
        <title>Empirical analysis of transcriptional activity in the Arabidopsis genome.</title>
        <authorList>
            <person name="Yamada K."/>
            <person name="Lim J."/>
            <person name="Dale J.M."/>
            <person name="Chen H."/>
            <person name="Shinn P."/>
            <person name="Palm C.J."/>
            <person name="Southwick A.M."/>
            <person name="Wu H.C."/>
            <person name="Kim C.J."/>
            <person name="Nguyen M."/>
            <person name="Pham P.K."/>
            <person name="Cheuk R.F."/>
            <person name="Karlin-Newmann G."/>
            <person name="Liu S.X."/>
            <person name="Lam B."/>
            <person name="Sakano H."/>
            <person name="Wu T."/>
            <person name="Yu G."/>
            <person name="Miranda M."/>
            <person name="Quach H.L."/>
            <person name="Tripp M."/>
            <person name="Chang C.H."/>
            <person name="Lee J.M."/>
            <person name="Toriumi M.J."/>
            <person name="Chan M.M."/>
            <person name="Tang C.C."/>
            <person name="Onodera C.S."/>
            <person name="Deng J.M."/>
            <person name="Akiyama K."/>
            <person name="Ansari Y."/>
            <person name="Arakawa T."/>
            <person name="Banh J."/>
            <person name="Banno F."/>
            <person name="Bowser L."/>
            <person name="Brooks S.Y."/>
            <person name="Carninci P."/>
            <person name="Chao Q."/>
            <person name="Choy N."/>
            <person name="Enju A."/>
            <person name="Goldsmith A.D."/>
            <person name="Gurjal M."/>
            <person name="Hansen N.F."/>
            <person name="Hayashizaki Y."/>
            <person name="Johnson-Hopson C."/>
            <person name="Hsuan V.W."/>
            <person name="Iida K."/>
            <person name="Karnes M."/>
            <person name="Khan S."/>
            <person name="Koesema E."/>
            <person name="Ishida J."/>
            <person name="Jiang P.X."/>
            <person name="Jones T."/>
            <person name="Kawai J."/>
            <person name="Kamiya A."/>
            <person name="Meyers C."/>
            <person name="Nakajima M."/>
            <person name="Narusaka M."/>
            <person name="Seki M."/>
            <person name="Sakurai T."/>
            <person name="Satou M."/>
            <person name="Tamse R."/>
            <person name="Vaysberg M."/>
            <person name="Wallender E.K."/>
            <person name="Wong C."/>
            <person name="Yamamura Y."/>
            <person name="Yuan S."/>
            <person name="Shinozaki K."/>
            <person name="Davis R.W."/>
            <person name="Theologis A."/>
            <person name="Ecker J.R."/>
        </authorList>
    </citation>
    <scope>NUCLEOTIDE SEQUENCE [LARGE SCALE MRNA]</scope>
    <source>
        <strain>cv. Columbia</strain>
    </source>
</reference>
<reference key="4">
    <citation type="journal article" date="2001" name="FEBS Lett.">
        <title>Phosphatidylglycerophosphate synthases from Arabidopsis thaliana.</title>
        <authorList>
            <person name="Muller F."/>
            <person name="Frentzen M."/>
        </authorList>
    </citation>
    <scope>FUNCTION</scope>
    <scope>CATALYTIC ACTIVITY</scope>
    <scope>COFACTOR</scope>
    <scope>BIOPHYSICOCHEMICAL PROPERTIES</scope>
    <scope>SUBCELLULAR LOCATION</scope>
</reference>
<reference key="5">
    <citation type="journal article" date="2014" name="FEBS Lett.">
        <title>Phosphatidylglycerol biosynthesis is required for the development of embryos and normal membrane structures of chloroplasts and mitochondria in Arabidopsis.</title>
        <authorList>
            <person name="Tanoue R."/>
            <person name="Kobayashi M."/>
            <person name="Katayama K."/>
            <person name="Nagata N."/>
            <person name="Wada H."/>
        </authorList>
    </citation>
    <scope>FUNCTION</scope>
    <scope>DISRUPTION PHENOTYPE</scope>
    <scope>SUBCELLULAR LOCATION</scope>
    <source>
        <strain>cv. Columbia</strain>
    </source>
</reference>
<dbReference type="EC" id="2.7.8.5" evidence="3"/>
<dbReference type="EMBL" id="AL132970">
    <property type="protein sequence ID" value="CAB82698.1"/>
    <property type="molecule type" value="Genomic_DNA"/>
</dbReference>
<dbReference type="EMBL" id="CP002686">
    <property type="protein sequence ID" value="AEE79330.1"/>
    <property type="molecule type" value="Genomic_DNA"/>
</dbReference>
<dbReference type="EMBL" id="AF370186">
    <property type="protein sequence ID" value="AAK44001.1"/>
    <property type="molecule type" value="mRNA"/>
</dbReference>
<dbReference type="EMBL" id="AY059144">
    <property type="protein sequence ID" value="AAL15250.1"/>
    <property type="molecule type" value="mRNA"/>
</dbReference>
<dbReference type="PIR" id="T47642">
    <property type="entry name" value="T47642"/>
</dbReference>
<dbReference type="RefSeq" id="NP_191063.1">
    <property type="nucleotide sequence ID" value="NM_115361.3"/>
</dbReference>
<dbReference type="SMR" id="Q9M2W3"/>
<dbReference type="BioGRID" id="9985">
    <property type="interactions" value="5"/>
</dbReference>
<dbReference type="FunCoup" id="Q9M2W3">
    <property type="interactions" value="69"/>
</dbReference>
<dbReference type="IntAct" id="Q9M2W3">
    <property type="interactions" value="5"/>
</dbReference>
<dbReference type="STRING" id="3702.Q9M2W3"/>
<dbReference type="iPTMnet" id="Q9M2W3"/>
<dbReference type="PaxDb" id="3702-AT3G55030.1"/>
<dbReference type="ProteomicsDB" id="235100"/>
<dbReference type="EnsemblPlants" id="AT3G55030.1">
    <property type="protein sequence ID" value="AT3G55030.1"/>
    <property type="gene ID" value="AT3G55030"/>
</dbReference>
<dbReference type="GeneID" id="824669"/>
<dbReference type="Gramene" id="AT3G55030.1">
    <property type="protein sequence ID" value="AT3G55030.1"/>
    <property type="gene ID" value="AT3G55030"/>
</dbReference>
<dbReference type="KEGG" id="ath:AT3G55030"/>
<dbReference type="Araport" id="AT3G55030"/>
<dbReference type="TAIR" id="AT3G55030">
    <property type="gene designation" value="PGPS2"/>
</dbReference>
<dbReference type="eggNOG" id="KOG1617">
    <property type="taxonomic scope" value="Eukaryota"/>
</dbReference>
<dbReference type="HOGENOM" id="CLU_051314_2_1_1"/>
<dbReference type="InParanoid" id="Q9M2W3"/>
<dbReference type="OMA" id="WFRWQSA"/>
<dbReference type="OrthoDB" id="10020554at2759"/>
<dbReference type="PhylomeDB" id="Q9M2W3"/>
<dbReference type="BioCyc" id="MetaCyc:AT3G55030-MONOMER"/>
<dbReference type="SABIO-RK" id="Q9M2W3"/>
<dbReference type="UniPathway" id="UPA00084">
    <property type="reaction ID" value="UER00503"/>
</dbReference>
<dbReference type="PRO" id="PR:Q9M2W3"/>
<dbReference type="Proteomes" id="UP000006548">
    <property type="component" value="Chromosome 3"/>
</dbReference>
<dbReference type="ExpressionAtlas" id="Q9M2W3">
    <property type="expression patterns" value="baseline and differential"/>
</dbReference>
<dbReference type="GO" id="GO:0009941">
    <property type="term" value="C:chloroplast envelope"/>
    <property type="evidence" value="ECO:0007005"/>
    <property type="project" value="TAIR"/>
</dbReference>
<dbReference type="GO" id="GO:0005789">
    <property type="term" value="C:endoplasmic reticulum membrane"/>
    <property type="evidence" value="ECO:0000314"/>
    <property type="project" value="UniProtKB"/>
</dbReference>
<dbReference type="GO" id="GO:0043231">
    <property type="term" value="C:intracellular membrane-bounded organelle"/>
    <property type="evidence" value="ECO:0000314"/>
    <property type="project" value="TAIR"/>
</dbReference>
<dbReference type="GO" id="GO:0008444">
    <property type="term" value="F:CDP-diacylglycerol-glycerol-3-phosphate 3-phosphatidyltransferase activity"/>
    <property type="evidence" value="ECO:0000314"/>
    <property type="project" value="TAIR"/>
</dbReference>
<dbReference type="GO" id="GO:0030145">
    <property type="term" value="F:manganese ion binding"/>
    <property type="evidence" value="ECO:0000314"/>
    <property type="project" value="UniProtKB"/>
</dbReference>
<dbReference type="GO" id="GO:0006655">
    <property type="term" value="P:phosphatidylglycerol biosynthetic process"/>
    <property type="evidence" value="ECO:0000315"/>
    <property type="project" value="UniProtKB"/>
</dbReference>
<dbReference type="GO" id="GO:0045995">
    <property type="term" value="P:regulation of embryonic development"/>
    <property type="evidence" value="ECO:0000315"/>
    <property type="project" value="UniProtKB"/>
</dbReference>
<dbReference type="FunFam" id="1.20.120.1760:FF:000008">
    <property type="entry name" value="CDP-diacylglycerol--glycerol-3-phosphate 3-phosphatidyltransferase 2"/>
    <property type="match status" value="1"/>
</dbReference>
<dbReference type="Gene3D" id="1.20.120.1760">
    <property type="match status" value="1"/>
</dbReference>
<dbReference type="InterPro" id="IPR050324">
    <property type="entry name" value="CDP-alcohol_PTase-I"/>
</dbReference>
<dbReference type="InterPro" id="IPR000462">
    <property type="entry name" value="CDP-OH_P_trans"/>
</dbReference>
<dbReference type="InterPro" id="IPR043130">
    <property type="entry name" value="CDP-OH_PTrfase_TM_dom"/>
</dbReference>
<dbReference type="InterPro" id="IPR048254">
    <property type="entry name" value="CDP_ALCOHOL_P_TRANSF_CS"/>
</dbReference>
<dbReference type="InterPro" id="IPR004570">
    <property type="entry name" value="Phosphatidylglycerol_P_synth"/>
</dbReference>
<dbReference type="NCBIfam" id="TIGR00560">
    <property type="entry name" value="pgsA"/>
    <property type="match status" value="1"/>
</dbReference>
<dbReference type="PANTHER" id="PTHR14269:SF40">
    <property type="entry name" value="CDP-DIACYLGLYCEROL--GLYCEROL-3-PHOSPHATE 3-PHOSPHATIDYLTRANSFERASE 2"/>
    <property type="match status" value="1"/>
</dbReference>
<dbReference type="PANTHER" id="PTHR14269">
    <property type="entry name" value="CDP-DIACYLGLYCEROL--GLYCEROL-3-PHOSPHATE 3-PHOSPHATIDYLTRANSFERASE-RELATED"/>
    <property type="match status" value="1"/>
</dbReference>
<dbReference type="Pfam" id="PF01066">
    <property type="entry name" value="CDP-OH_P_transf"/>
    <property type="match status" value="1"/>
</dbReference>
<dbReference type="PIRSF" id="PIRSF000847">
    <property type="entry name" value="Phos_ph_gly_syn"/>
    <property type="match status" value="1"/>
</dbReference>
<dbReference type="PROSITE" id="PS00379">
    <property type="entry name" value="CDP_ALCOHOL_P_TRANSF"/>
    <property type="match status" value="1"/>
</dbReference>
<organism>
    <name type="scientific">Arabidopsis thaliana</name>
    <name type="common">Mouse-ear cress</name>
    <dbReference type="NCBI Taxonomy" id="3702"/>
    <lineage>
        <taxon>Eukaryota</taxon>
        <taxon>Viridiplantae</taxon>
        <taxon>Streptophyta</taxon>
        <taxon>Embryophyta</taxon>
        <taxon>Tracheophyta</taxon>
        <taxon>Spermatophyta</taxon>
        <taxon>Magnoliopsida</taxon>
        <taxon>eudicotyledons</taxon>
        <taxon>Gunneridae</taxon>
        <taxon>Pentapetalae</taxon>
        <taxon>rosids</taxon>
        <taxon>malvids</taxon>
        <taxon>Brassicales</taxon>
        <taxon>Brassicaceae</taxon>
        <taxon>Camelineae</taxon>
        <taxon>Arabidopsis</taxon>
    </lineage>
</organism>
<keyword id="KW-0256">Endoplasmic reticulum</keyword>
<keyword id="KW-0444">Lipid biosynthesis</keyword>
<keyword id="KW-0443">Lipid metabolism</keyword>
<keyword id="KW-0472">Membrane</keyword>
<keyword id="KW-0492">Microsome</keyword>
<keyword id="KW-0594">Phospholipid biosynthesis</keyword>
<keyword id="KW-1208">Phospholipid metabolism</keyword>
<keyword id="KW-1185">Reference proteome</keyword>
<keyword id="KW-0808">Transferase</keyword>
<keyword id="KW-0812">Transmembrane</keyword>
<keyword id="KW-1133">Transmembrane helix</keyword>
<accession>Q9M2W3</accession>
<sequence length="233" mass="25220">MGEEDTATVDQNSFGGGKDSLLRNRHSSPLPSPTQLSSKVITLPTVLTLGRVAAVPILVATFYVDCWWGRTATTSIFIAAAITDWLDGYIARKMRLGSEFGAFLDPVADKLMVAATLILLCTKPMVAVVLGPVPWLVTVPSIAIIGREITMSAVREWAASQNGKLSEAVAVNSLGKWKTATQMIALTILLASRDSSFERLLPSGIGLLYVSAGLSIWSLVVYMRKIWRVLLKK</sequence>
<feature type="chain" id="PRO_0000429136" description="CDP-diacylglycerol--glycerol-3-phosphate 3-phosphatidyltransferase 2">
    <location>
        <begin position="1"/>
        <end position="233"/>
    </location>
</feature>
<feature type="transmembrane region" description="Helical" evidence="1">
    <location>
        <begin position="40"/>
        <end position="60"/>
    </location>
</feature>
<feature type="transmembrane region" description="Helical" evidence="1">
    <location>
        <begin position="71"/>
        <end position="91"/>
    </location>
</feature>
<feature type="transmembrane region" description="Helical" evidence="1">
    <location>
        <begin position="100"/>
        <end position="120"/>
    </location>
</feature>
<feature type="transmembrane region" description="Helical" evidence="1">
    <location>
        <begin position="125"/>
        <end position="145"/>
    </location>
</feature>
<feature type="transmembrane region" description="Helical" evidence="1">
    <location>
        <begin position="201"/>
        <end position="221"/>
    </location>
</feature>
<feature type="region of interest" description="Disordered" evidence="2">
    <location>
        <begin position="1"/>
        <end position="23"/>
    </location>
</feature>